<sequence>MKILLLILIAYLLGSIQTGLWIGKVFFHTNLREHGSGNTGTTNTFRVLGKTAGTITFLVDMLKGTLAVLLPIWLGITEVSPLIIGFFAIIGHVFPFFTGFKGGKAVATSAGVLLGFVPLYFVFLLLVFALTLYLTSMISFSSITAAVVGLITLATFPAIHFLLDGYDPIFSAVLIIIVLVIIFRHTENIARIRNHRENLVPFGLNLTKQNPKK</sequence>
<protein>
    <recommendedName>
        <fullName evidence="1">Glycerol-3-phosphate acyltransferase</fullName>
    </recommendedName>
    <alternativeName>
        <fullName evidence="1">Acyl-PO4 G3P acyltransferase</fullName>
    </alternativeName>
    <alternativeName>
        <fullName evidence="1">Acyl-phosphate--glycerol-3-phosphate acyltransferase</fullName>
    </alternativeName>
    <alternativeName>
        <fullName evidence="1">G3P acyltransferase</fullName>
        <shortName evidence="1">GPAT</shortName>
        <ecNumber evidence="1">2.3.1.275</ecNumber>
    </alternativeName>
    <alternativeName>
        <fullName evidence="1">Lysophosphatidic acid synthase</fullName>
        <shortName evidence="1">LPA synthase</shortName>
    </alternativeName>
</protein>
<keyword id="KW-1003">Cell membrane</keyword>
<keyword id="KW-0444">Lipid biosynthesis</keyword>
<keyword id="KW-0443">Lipid metabolism</keyword>
<keyword id="KW-0472">Membrane</keyword>
<keyword id="KW-0594">Phospholipid biosynthesis</keyword>
<keyword id="KW-1208">Phospholipid metabolism</keyword>
<keyword id="KW-0808">Transferase</keyword>
<keyword id="KW-0812">Transmembrane</keyword>
<keyword id="KW-1133">Transmembrane helix</keyword>
<evidence type="ECO:0000255" key="1">
    <source>
        <dbReference type="HAMAP-Rule" id="MF_01043"/>
    </source>
</evidence>
<gene>
    <name evidence="1" type="primary">plsY</name>
    <name type="ordered locus">STER_0632</name>
</gene>
<proteinExistence type="inferred from homology"/>
<dbReference type="EC" id="2.3.1.275" evidence="1"/>
<dbReference type="EMBL" id="CP000419">
    <property type="protein sequence ID" value="ABJ65899.1"/>
    <property type="molecule type" value="Genomic_DNA"/>
</dbReference>
<dbReference type="RefSeq" id="WP_011680909.1">
    <property type="nucleotide sequence ID" value="NC_008532.1"/>
</dbReference>
<dbReference type="SMR" id="Q03LM3"/>
<dbReference type="KEGG" id="ste:STER_0632"/>
<dbReference type="HOGENOM" id="CLU_081254_0_0_9"/>
<dbReference type="UniPathway" id="UPA00085"/>
<dbReference type="GO" id="GO:0005886">
    <property type="term" value="C:plasma membrane"/>
    <property type="evidence" value="ECO:0007669"/>
    <property type="project" value="UniProtKB-SubCell"/>
</dbReference>
<dbReference type="GO" id="GO:0043772">
    <property type="term" value="F:acyl-phosphate glycerol-3-phosphate acyltransferase activity"/>
    <property type="evidence" value="ECO:0007669"/>
    <property type="project" value="UniProtKB-UniRule"/>
</dbReference>
<dbReference type="GO" id="GO:0008654">
    <property type="term" value="P:phospholipid biosynthetic process"/>
    <property type="evidence" value="ECO:0007669"/>
    <property type="project" value="UniProtKB-UniRule"/>
</dbReference>
<dbReference type="HAMAP" id="MF_01043">
    <property type="entry name" value="PlsY"/>
    <property type="match status" value="1"/>
</dbReference>
<dbReference type="InterPro" id="IPR003811">
    <property type="entry name" value="G3P_acylTferase_PlsY"/>
</dbReference>
<dbReference type="NCBIfam" id="TIGR00023">
    <property type="entry name" value="glycerol-3-phosphate 1-O-acyltransferase PlsY"/>
    <property type="match status" value="1"/>
</dbReference>
<dbReference type="PANTHER" id="PTHR30309:SF0">
    <property type="entry name" value="GLYCEROL-3-PHOSPHATE ACYLTRANSFERASE-RELATED"/>
    <property type="match status" value="1"/>
</dbReference>
<dbReference type="PANTHER" id="PTHR30309">
    <property type="entry name" value="INNER MEMBRANE PROTEIN YGIH"/>
    <property type="match status" value="1"/>
</dbReference>
<dbReference type="Pfam" id="PF02660">
    <property type="entry name" value="G3P_acyltransf"/>
    <property type="match status" value="1"/>
</dbReference>
<dbReference type="SMART" id="SM01207">
    <property type="entry name" value="G3P_acyltransf"/>
    <property type="match status" value="1"/>
</dbReference>
<feature type="chain" id="PRO_1000064234" description="Glycerol-3-phosphate acyltransferase">
    <location>
        <begin position="1"/>
        <end position="213"/>
    </location>
</feature>
<feature type="transmembrane region" description="Helical" evidence="1">
    <location>
        <begin position="3"/>
        <end position="23"/>
    </location>
</feature>
<feature type="transmembrane region" description="Helical" evidence="1">
    <location>
        <begin position="54"/>
        <end position="76"/>
    </location>
</feature>
<feature type="transmembrane region" description="Helical" evidence="1">
    <location>
        <begin position="83"/>
        <end position="100"/>
    </location>
</feature>
<feature type="transmembrane region" description="Helical" evidence="1">
    <location>
        <begin position="110"/>
        <end position="130"/>
    </location>
</feature>
<feature type="transmembrane region" description="Helical" evidence="1">
    <location>
        <begin position="142"/>
        <end position="162"/>
    </location>
</feature>
<feature type="transmembrane region" description="Helical" evidence="1">
    <location>
        <begin position="163"/>
        <end position="183"/>
    </location>
</feature>
<comment type="function">
    <text evidence="1">Catalyzes the transfer of an acyl group from acyl-phosphate (acyl-PO(4)) to glycerol-3-phosphate (G3P) to form lysophosphatidic acid (LPA). This enzyme utilizes acyl-phosphate as fatty acyl donor, but not acyl-CoA or acyl-ACP.</text>
</comment>
<comment type="catalytic activity">
    <reaction evidence="1">
        <text>an acyl phosphate + sn-glycerol 3-phosphate = a 1-acyl-sn-glycero-3-phosphate + phosphate</text>
        <dbReference type="Rhea" id="RHEA:34075"/>
        <dbReference type="ChEBI" id="CHEBI:43474"/>
        <dbReference type="ChEBI" id="CHEBI:57597"/>
        <dbReference type="ChEBI" id="CHEBI:57970"/>
        <dbReference type="ChEBI" id="CHEBI:59918"/>
        <dbReference type="EC" id="2.3.1.275"/>
    </reaction>
</comment>
<comment type="pathway">
    <text evidence="1">Lipid metabolism; phospholipid metabolism.</text>
</comment>
<comment type="subunit">
    <text evidence="1">Probably interacts with PlsX.</text>
</comment>
<comment type="subcellular location">
    <subcellularLocation>
        <location evidence="1">Cell membrane</location>
        <topology evidence="1">Multi-pass membrane protein</topology>
    </subcellularLocation>
</comment>
<comment type="similarity">
    <text evidence="1">Belongs to the PlsY family.</text>
</comment>
<name>PLSY_STRTD</name>
<accession>Q03LM3</accession>
<reference key="1">
    <citation type="journal article" date="2006" name="Proc. Natl. Acad. Sci. U.S.A.">
        <title>Comparative genomics of the lactic acid bacteria.</title>
        <authorList>
            <person name="Makarova K.S."/>
            <person name="Slesarev A."/>
            <person name="Wolf Y.I."/>
            <person name="Sorokin A."/>
            <person name="Mirkin B."/>
            <person name="Koonin E.V."/>
            <person name="Pavlov A."/>
            <person name="Pavlova N."/>
            <person name="Karamychev V."/>
            <person name="Polouchine N."/>
            <person name="Shakhova V."/>
            <person name="Grigoriev I."/>
            <person name="Lou Y."/>
            <person name="Rohksar D."/>
            <person name="Lucas S."/>
            <person name="Huang K."/>
            <person name="Goodstein D.M."/>
            <person name="Hawkins T."/>
            <person name="Plengvidhya V."/>
            <person name="Welker D."/>
            <person name="Hughes J."/>
            <person name="Goh Y."/>
            <person name="Benson A."/>
            <person name="Baldwin K."/>
            <person name="Lee J.-H."/>
            <person name="Diaz-Muniz I."/>
            <person name="Dosti B."/>
            <person name="Smeianov V."/>
            <person name="Wechter W."/>
            <person name="Barabote R."/>
            <person name="Lorca G."/>
            <person name="Altermann E."/>
            <person name="Barrangou R."/>
            <person name="Ganesan B."/>
            <person name="Xie Y."/>
            <person name="Rawsthorne H."/>
            <person name="Tamir D."/>
            <person name="Parker C."/>
            <person name="Breidt F."/>
            <person name="Broadbent J.R."/>
            <person name="Hutkins R."/>
            <person name="O'Sullivan D."/>
            <person name="Steele J."/>
            <person name="Unlu G."/>
            <person name="Saier M.H. Jr."/>
            <person name="Klaenhammer T."/>
            <person name="Richardson P."/>
            <person name="Kozyavkin S."/>
            <person name="Weimer B.C."/>
            <person name="Mills D.A."/>
        </authorList>
    </citation>
    <scope>NUCLEOTIDE SEQUENCE [LARGE SCALE GENOMIC DNA]</scope>
    <source>
        <strain>ATCC BAA-491 / LMD-9</strain>
    </source>
</reference>
<organism>
    <name type="scientific">Streptococcus thermophilus (strain ATCC BAA-491 / LMD-9)</name>
    <dbReference type="NCBI Taxonomy" id="322159"/>
    <lineage>
        <taxon>Bacteria</taxon>
        <taxon>Bacillati</taxon>
        <taxon>Bacillota</taxon>
        <taxon>Bacilli</taxon>
        <taxon>Lactobacillales</taxon>
        <taxon>Streptococcaceae</taxon>
        <taxon>Streptococcus</taxon>
    </lineage>
</organism>